<proteinExistence type="evidence at protein level"/>
<name>DID6A_ECHCS</name>
<accession>P82465</accession>
<accession>E9JGH5</accession>
<organism>
    <name type="scientific">Echis carinatus sochureki</name>
    <name type="common">Saw-scaled viper</name>
    <dbReference type="NCBI Taxonomy" id="124223"/>
    <lineage>
        <taxon>Eukaryota</taxon>
        <taxon>Metazoa</taxon>
        <taxon>Chordata</taxon>
        <taxon>Craniata</taxon>
        <taxon>Vertebrata</taxon>
        <taxon>Euteleostomi</taxon>
        <taxon>Lepidosauria</taxon>
        <taxon>Squamata</taxon>
        <taxon>Bifurcata</taxon>
        <taxon>Unidentata</taxon>
        <taxon>Episquamata</taxon>
        <taxon>Toxicofera</taxon>
        <taxon>Serpentes</taxon>
        <taxon>Colubroidea</taxon>
        <taxon>Viperidae</taxon>
        <taxon>Viperinae</taxon>
        <taxon>Echis</taxon>
    </lineage>
</organism>
<sequence>MIQVLLVIICLAVFPYQGSSIILESGNINDYEIVYPKKVAVLPTGAMNSVHPCCDPVTCEPREGEHCISGPCCRNCKFLNAGTICKKAMLDGLNDYCTGISSDCPRNRYKGKEDD</sequence>
<keyword id="KW-1217">Cell adhesion impairing toxin</keyword>
<keyword id="KW-0903">Direct protein sequencing</keyword>
<keyword id="KW-1015">Disulfide bond</keyword>
<keyword id="KW-0964">Secreted</keyword>
<keyword id="KW-0732">Signal</keyword>
<keyword id="KW-0800">Toxin</keyword>
<reference key="1">
    <citation type="journal article" date="2011" name="Mol. Biol. Evol.">
        <title>Gene tree parsimony of multilocus snake venom protein families reveals species tree conflict as a result of multiple parallel gene loss.</title>
        <authorList>
            <person name="Casewell N.R."/>
            <person name="Wagstaff S.C."/>
            <person name="Harrison R.A."/>
            <person name="Wuster W."/>
        </authorList>
    </citation>
    <scope>NUCLEOTIDE SEQUENCE [MRNA]</scope>
    <source>
        <tissue>Venom gland</tissue>
    </source>
</reference>
<reference key="2">
    <citation type="journal article" date="2000" name="J. Biol. Chem.">
        <title>Inhibitory effects of MLDG-containing heterodimeric disintegrins reveal distinct structural requirements for interaction of the integrin alpha 9beta 1 with VCAM-1, tenascin-C, and osteopontin.</title>
        <authorList>
            <person name="Marcinkiewicz C."/>
            <person name="Taooka Y."/>
            <person name="Yokosaki Y."/>
            <person name="Calvete J.J."/>
            <person name="Marcinkiewicz M.M."/>
            <person name="Lobb R.R."/>
            <person name="Niewiarowski S."/>
            <person name="Sheppard D."/>
        </authorList>
    </citation>
    <scope>PROTEIN SEQUENCE OF 48-115</scope>
    <scope>FUNCTION</scope>
    <scope>MOTIF MET-89--91-ASP</scope>
    <scope>IDENTIFICATION BY MASS SPECTROMETRY</scope>
    <source>
        <tissue>Venom</tissue>
    </source>
</reference>
<dbReference type="EMBL" id="GU012272">
    <property type="protein sequence ID" value="ADI47726.1"/>
    <property type="molecule type" value="mRNA"/>
</dbReference>
<dbReference type="GO" id="GO:0005576">
    <property type="term" value="C:extracellular region"/>
    <property type="evidence" value="ECO:0007669"/>
    <property type="project" value="UniProtKB-SubCell"/>
</dbReference>
<dbReference type="GO" id="GO:0090729">
    <property type="term" value="F:toxin activity"/>
    <property type="evidence" value="ECO:0007669"/>
    <property type="project" value="UniProtKB-KW"/>
</dbReference>
<dbReference type="Gene3D" id="4.10.70.10">
    <property type="entry name" value="Disintegrin domain"/>
    <property type="match status" value="1"/>
</dbReference>
<dbReference type="InterPro" id="IPR018358">
    <property type="entry name" value="Disintegrin_CS"/>
</dbReference>
<dbReference type="InterPro" id="IPR001762">
    <property type="entry name" value="Disintegrin_dom"/>
</dbReference>
<dbReference type="InterPro" id="IPR036436">
    <property type="entry name" value="Disintegrin_dom_sf"/>
</dbReference>
<dbReference type="PANTHER" id="PTHR11905">
    <property type="entry name" value="ADAM A DISINTEGRIN AND METALLOPROTEASE DOMAIN"/>
    <property type="match status" value="1"/>
</dbReference>
<dbReference type="PANTHER" id="PTHR11905:SF159">
    <property type="entry name" value="ADAM METALLOPROTEASE"/>
    <property type="match status" value="1"/>
</dbReference>
<dbReference type="Pfam" id="PF00200">
    <property type="entry name" value="Disintegrin"/>
    <property type="match status" value="1"/>
</dbReference>
<dbReference type="PRINTS" id="PR00289">
    <property type="entry name" value="DISINTEGRIN"/>
</dbReference>
<dbReference type="SMART" id="SM00050">
    <property type="entry name" value="DISIN"/>
    <property type="match status" value="1"/>
</dbReference>
<dbReference type="SUPFAM" id="SSF57552">
    <property type="entry name" value="Blood coagulation inhibitor (disintegrin)"/>
    <property type="match status" value="1"/>
</dbReference>
<dbReference type="PROSITE" id="PS00427">
    <property type="entry name" value="DISINTEGRIN_1"/>
    <property type="match status" value="1"/>
</dbReference>
<dbReference type="PROSITE" id="PS50214">
    <property type="entry name" value="DISINTEGRIN_2"/>
    <property type="match status" value="1"/>
</dbReference>
<feature type="signal peptide" evidence="1">
    <location>
        <begin position="1"/>
        <end position="20"/>
    </location>
</feature>
<feature type="propeptide" id="PRO_0000423376" evidence="3">
    <location>
        <begin position="21"/>
        <end position="47"/>
    </location>
</feature>
<feature type="chain" id="PRO_0000101801" description="Disintegrin EC6 subunit alpha">
    <location>
        <begin position="48"/>
        <end position="115"/>
    </location>
</feature>
<feature type="domain" description="Disintegrin" evidence="2">
    <location>
        <begin position="48"/>
        <end position="112"/>
    </location>
</feature>
<feature type="short sequence motif" description="Cell attachment site; atypical (MLD)">
    <location>
        <begin position="89"/>
        <end position="91"/>
    </location>
</feature>
<feature type="disulfide bond" evidence="2">
    <location>
        <begin position="53"/>
        <end position="76"/>
    </location>
</feature>
<feature type="disulfide bond" description="Interchain (with C-12 in subunit beta)" evidence="2">
    <location>
        <position position="54"/>
    </location>
</feature>
<feature type="disulfide bond" description="Interchain (with C-7 in subunit beta)" evidence="2">
    <location>
        <position position="59"/>
    </location>
</feature>
<feature type="disulfide bond" evidence="2">
    <location>
        <begin position="67"/>
        <end position="73"/>
    </location>
</feature>
<feature type="disulfide bond" evidence="2">
    <location>
        <begin position="72"/>
        <end position="97"/>
    </location>
</feature>
<feature type="disulfide bond" evidence="2">
    <location>
        <begin position="85"/>
        <end position="104"/>
    </location>
</feature>
<comment type="function">
    <text evidence="3">Potently inhibits adhesion of alpha-4/beta-1 (ITGA4/ITGB1) and alpha-9/beta-1 (ITGA9/ITGB1) integrins to VCAM1, and adhesion of alpha-5/beta-1 (ITGA5/ITGB1) integrin to fibronectin. Has a much less effect on alpha-IIb/beta-3 (ITGA2B/ITGB3) integrin. Also potently inhibits neutrophil migration across TNF-alpha-activated human umbilical endothelial cells.</text>
</comment>
<comment type="subunit">
    <text>Heterodimer with subunit beta; disulfide-linked.</text>
</comment>
<comment type="subcellular location">
    <subcellularLocation>
        <location>Secreted</location>
    </subcellularLocation>
</comment>
<comment type="tissue specificity">
    <text>Expressed by the venom gland.</text>
</comment>
<comment type="similarity">
    <text evidence="4">Belongs to the disintegrin family. Dimeric disintegrin subfamily.</text>
</comment>
<evidence type="ECO:0000255" key="1"/>
<evidence type="ECO:0000255" key="2">
    <source>
        <dbReference type="PROSITE-ProRule" id="PRU00068"/>
    </source>
</evidence>
<evidence type="ECO:0000269" key="3">
    <source>
    </source>
</evidence>
<evidence type="ECO:0000305" key="4"/>
<protein>
    <recommendedName>
        <fullName>Disintegrin EC6 subunit alpha</fullName>
        <shortName>EC6A</shortName>
    </recommendedName>
</protein>